<evidence type="ECO:0000255" key="1">
    <source>
        <dbReference type="HAMAP-Rule" id="MF_00126"/>
    </source>
</evidence>
<accession>B7MPI5</accession>
<comment type="catalytic activity">
    <reaction evidence="1">
        <text>tRNA(Gln) + L-glutamine + ATP = L-glutaminyl-tRNA(Gln) + AMP + diphosphate</text>
        <dbReference type="Rhea" id="RHEA:20121"/>
        <dbReference type="Rhea" id="RHEA-COMP:9662"/>
        <dbReference type="Rhea" id="RHEA-COMP:9681"/>
        <dbReference type="ChEBI" id="CHEBI:30616"/>
        <dbReference type="ChEBI" id="CHEBI:33019"/>
        <dbReference type="ChEBI" id="CHEBI:58359"/>
        <dbReference type="ChEBI" id="CHEBI:78442"/>
        <dbReference type="ChEBI" id="CHEBI:78521"/>
        <dbReference type="ChEBI" id="CHEBI:456215"/>
        <dbReference type="EC" id="6.1.1.18"/>
    </reaction>
</comment>
<comment type="subunit">
    <text evidence="1">Monomer.</text>
</comment>
<comment type="subcellular location">
    <subcellularLocation>
        <location evidence="1">Cytoplasm</location>
    </subcellularLocation>
</comment>
<comment type="similarity">
    <text evidence="1">Belongs to the class-I aminoacyl-tRNA synthetase family.</text>
</comment>
<dbReference type="EC" id="6.1.1.18" evidence="1"/>
<dbReference type="EMBL" id="CU928162">
    <property type="protein sequence ID" value="CAR06867.1"/>
    <property type="molecule type" value="Genomic_DNA"/>
</dbReference>
<dbReference type="RefSeq" id="WP_001287134.1">
    <property type="nucleotide sequence ID" value="NC_011745.1"/>
</dbReference>
<dbReference type="SMR" id="B7MPI5"/>
<dbReference type="KEGG" id="ecq:ECED1_0661"/>
<dbReference type="HOGENOM" id="CLU_001882_2_3_6"/>
<dbReference type="Proteomes" id="UP000000748">
    <property type="component" value="Chromosome"/>
</dbReference>
<dbReference type="GO" id="GO:0005829">
    <property type="term" value="C:cytosol"/>
    <property type="evidence" value="ECO:0007669"/>
    <property type="project" value="TreeGrafter"/>
</dbReference>
<dbReference type="GO" id="GO:0005524">
    <property type="term" value="F:ATP binding"/>
    <property type="evidence" value="ECO:0007669"/>
    <property type="project" value="UniProtKB-UniRule"/>
</dbReference>
<dbReference type="GO" id="GO:0004819">
    <property type="term" value="F:glutamine-tRNA ligase activity"/>
    <property type="evidence" value="ECO:0007669"/>
    <property type="project" value="UniProtKB-UniRule"/>
</dbReference>
<dbReference type="GO" id="GO:0006425">
    <property type="term" value="P:glutaminyl-tRNA aminoacylation"/>
    <property type="evidence" value="ECO:0007669"/>
    <property type="project" value="InterPro"/>
</dbReference>
<dbReference type="GO" id="GO:0006424">
    <property type="term" value="P:glutamyl-tRNA aminoacylation"/>
    <property type="evidence" value="ECO:0007669"/>
    <property type="project" value="UniProtKB-UniRule"/>
</dbReference>
<dbReference type="CDD" id="cd00807">
    <property type="entry name" value="GlnRS_core"/>
    <property type="match status" value="1"/>
</dbReference>
<dbReference type="FunFam" id="1.10.1160.10:FF:000001">
    <property type="entry name" value="Glutamine--tRNA ligase"/>
    <property type="match status" value="1"/>
</dbReference>
<dbReference type="FunFam" id="2.40.240.10:FF:000001">
    <property type="entry name" value="Glutamine--tRNA ligase"/>
    <property type="match status" value="1"/>
</dbReference>
<dbReference type="FunFam" id="2.40.240.10:FF:000003">
    <property type="entry name" value="Glutamine--tRNA ligase"/>
    <property type="match status" value="1"/>
</dbReference>
<dbReference type="FunFam" id="3.90.800.10:FF:000001">
    <property type="entry name" value="Glutamine--tRNA ligase"/>
    <property type="match status" value="1"/>
</dbReference>
<dbReference type="FunFam" id="3.40.50.620:FF:000037">
    <property type="entry name" value="Glutamine--tRNA ligase cytoplasmic"/>
    <property type="match status" value="1"/>
</dbReference>
<dbReference type="Gene3D" id="1.10.1160.10">
    <property type="entry name" value="Glutamyl-trna Synthetase, Domain 2"/>
    <property type="match status" value="1"/>
</dbReference>
<dbReference type="Gene3D" id="3.90.800.10">
    <property type="entry name" value="Glutamyl-tRNA Synthetase, Domain 3"/>
    <property type="match status" value="1"/>
</dbReference>
<dbReference type="Gene3D" id="3.40.50.620">
    <property type="entry name" value="HUPs"/>
    <property type="match status" value="1"/>
</dbReference>
<dbReference type="Gene3D" id="2.40.240.10">
    <property type="entry name" value="Ribosomal Protein L25, Chain P"/>
    <property type="match status" value="2"/>
</dbReference>
<dbReference type="HAMAP" id="MF_00126">
    <property type="entry name" value="Gln_tRNA_synth"/>
    <property type="match status" value="1"/>
</dbReference>
<dbReference type="InterPro" id="IPR001412">
    <property type="entry name" value="aa-tRNA-synth_I_CS"/>
</dbReference>
<dbReference type="InterPro" id="IPR004514">
    <property type="entry name" value="Gln-tRNA-synth"/>
</dbReference>
<dbReference type="InterPro" id="IPR050132">
    <property type="entry name" value="Gln/Glu-tRNA_Ligase"/>
</dbReference>
<dbReference type="InterPro" id="IPR022861">
    <property type="entry name" value="Gln_tRNA_ligase_bac"/>
</dbReference>
<dbReference type="InterPro" id="IPR000924">
    <property type="entry name" value="Glu/Gln-tRNA-synth"/>
</dbReference>
<dbReference type="InterPro" id="IPR020058">
    <property type="entry name" value="Glu/Gln-tRNA-synth_Ib_cat-dom"/>
</dbReference>
<dbReference type="InterPro" id="IPR020059">
    <property type="entry name" value="Glu/Gln-tRNA-synth_Ib_codon-bd"/>
</dbReference>
<dbReference type="InterPro" id="IPR020061">
    <property type="entry name" value="Glu_tRNA_lig_a-bdl"/>
</dbReference>
<dbReference type="InterPro" id="IPR020056">
    <property type="entry name" value="Rbsml_bL25/Gln-tRNA_synth_N"/>
</dbReference>
<dbReference type="InterPro" id="IPR011035">
    <property type="entry name" value="Ribosomal_bL25/Gln-tRNA_synth"/>
</dbReference>
<dbReference type="InterPro" id="IPR014729">
    <property type="entry name" value="Rossmann-like_a/b/a_fold"/>
</dbReference>
<dbReference type="InterPro" id="IPR049437">
    <property type="entry name" value="tRNA-synt_1c_C2"/>
</dbReference>
<dbReference type="NCBIfam" id="TIGR00440">
    <property type="entry name" value="glnS"/>
    <property type="match status" value="1"/>
</dbReference>
<dbReference type="NCBIfam" id="NF011291">
    <property type="entry name" value="PRK14703.1"/>
    <property type="match status" value="1"/>
</dbReference>
<dbReference type="PANTHER" id="PTHR43097:SF5">
    <property type="entry name" value="GLUTAMATE--TRNA LIGASE"/>
    <property type="match status" value="1"/>
</dbReference>
<dbReference type="PANTHER" id="PTHR43097">
    <property type="entry name" value="GLUTAMINE-TRNA LIGASE"/>
    <property type="match status" value="1"/>
</dbReference>
<dbReference type="Pfam" id="PF00749">
    <property type="entry name" value="tRNA-synt_1c"/>
    <property type="match status" value="1"/>
</dbReference>
<dbReference type="Pfam" id="PF03950">
    <property type="entry name" value="tRNA-synt_1c_C"/>
    <property type="match status" value="1"/>
</dbReference>
<dbReference type="Pfam" id="PF20974">
    <property type="entry name" value="tRNA-synt_1c_C2"/>
    <property type="match status" value="1"/>
</dbReference>
<dbReference type="PRINTS" id="PR00987">
    <property type="entry name" value="TRNASYNTHGLU"/>
</dbReference>
<dbReference type="SUPFAM" id="SSF52374">
    <property type="entry name" value="Nucleotidylyl transferase"/>
    <property type="match status" value="1"/>
</dbReference>
<dbReference type="SUPFAM" id="SSF50715">
    <property type="entry name" value="Ribosomal protein L25-like"/>
    <property type="match status" value="1"/>
</dbReference>
<dbReference type="PROSITE" id="PS00178">
    <property type="entry name" value="AA_TRNA_LIGASE_I"/>
    <property type="match status" value="1"/>
</dbReference>
<organism>
    <name type="scientific">Escherichia coli O81 (strain ED1a)</name>
    <dbReference type="NCBI Taxonomy" id="585397"/>
    <lineage>
        <taxon>Bacteria</taxon>
        <taxon>Pseudomonadati</taxon>
        <taxon>Pseudomonadota</taxon>
        <taxon>Gammaproteobacteria</taxon>
        <taxon>Enterobacterales</taxon>
        <taxon>Enterobacteriaceae</taxon>
        <taxon>Escherichia</taxon>
    </lineage>
</organism>
<feature type="chain" id="PRO_1000199100" description="Glutamine--tRNA ligase">
    <location>
        <begin position="1"/>
        <end position="554"/>
    </location>
</feature>
<feature type="region of interest" description="Interaction with tRNA" evidence="1">
    <location>
        <begin position="317"/>
        <end position="324"/>
    </location>
</feature>
<feature type="short sequence motif" description="'HIGH' region" evidence="1">
    <location>
        <begin position="34"/>
        <end position="44"/>
    </location>
</feature>
<feature type="short sequence motif" description="'KMSKS' region" evidence="1">
    <location>
        <begin position="268"/>
        <end position="272"/>
    </location>
</feature>
<feature type="binding site" evidence="1">
    <location>
        <begin position="35"/>
        <end position="37"/>
    </location>
    <ligand>
        <name>ATP</name>
        <dbReference type="ChEBI" id="CHEBI:30616"/>
    </ligand>
</feature>
<feature type="binding site" evidence="1">
    <location>
        <begin position="41"/>
        <end position="47"/>
    </location>
    <ligand>
        <name>ATP</name>
        <dbReference type="ChEBI" id="CHEBI:30616"/>
    </ligand>
</feature>
<feature type="binding site" evidence="1">
    <location>
        <position position="67"/>
    </location>
    <ligand>
        <name>L-glutamine</name>
        <dbReference type="ChEBI" id="CHEBI:58359"/>
    </ligand>
</feature>
<feature type="binding site" evidence="1">
    <location>
        <position position="212"/>
    </location>
    <ligand>
        <name>L-glutamine</name>
        <dbReference type="ChEBI" id="CHEBI:58359"/>
    </ligand>
</feature>
<feature type="binding site" evidence="1">
    <location>
        <position position="231"/>
    </location>
    <ligand>
        <name>ATP</name>
        <dbReference type="ChEBI" id="CHEBI:30616"/>
    </ligand>
</feature>
<feature type="binding site" evidence="1">
    <location>
        <begin position="261"/>
        <end position="262"/>
    </location>
    <ligand>
        <name>ATP</name>
        <dbReference type="ChEBI" id="CHEBI:30616"/>
    </ligand>
</feature>
<feature type="binding site" evidence="1">
    <location>
        <begin position="269"/>
        <end position="271"/>
    </location>
    <ligand>
        <name>ATP</name>
        <dbReference type="ChEBI" id="CHEBI:30616"/>
    </ligand>
</feature>
<gene>
    <name evidence="1" type="primary">glnS</name>
    <name type="ordered locus">ECED1_0661</name>
</gene>
<proteinExistence type="inferred from homology"/>
<sequence length="554" mass="63494">MSEAEARPTNFIRQIIDEDLASGKHTTVHTRFPPEPNGYLHIGHAKSICLNFGIAQDYKGQCNLRFDDTNPVKEDIEYVDSIKNDVEWLGFHWSGNVRYSSDYFDQLHAYAIELINKGLAYVDELTPEQIREYRGTLTQPGKNSPYRDRSVEENLALFEKMRTGGFEEGKACLRAKIDMASPFIVMRDPVLYRIKFAEHHQTGNKWCIYPMYDFTHCISDALEGITHSLCTLEFQDNRRLYDWVLDNITIPVHPRQYEFSRLNLEYTVMSKRKLNLLVTDKHVEGWDDPRMPTISGLRRRGYTAASIREFCKRIGVTKQDNTIEMASLESCIREDLNENAPRAMAVIDPVKLVIENYQGEGEMVTMPNHPNKPEMGSRQVPFSGEIWIDRADFREEANKQYKRLVLGKEVRLRNAYVIKAERVEKDAEGNITTIFCTYDADTLSKDPADGRKVKGVIHWVSAAHALPVEIRLYDRLFSVPNPGAADDFLSVINPESLVIKQGFAEPSLKDAVAGKAFQFEREGYFCLDSRHSTAEKPVFNRTVGLRDTWAKVGE</sequence>
<reference key="1">
    <citation type="journal article" date="2009" name="PLoS Genet.">
        <title>Organised genome dynamics in the Escherichia coli species results in highly diverse adaptive paths.</title>
        <authorList>
            <person name="Touchon M."/>
            <person name="Hoede C."/>
            <person name="Tenaillon O."/>
            <person name="Barbe V."/>
            <person name="Baeriswyl S."/>
            <person name="Bidet P."/>
            <person name="Bingen E."/>
            <person name="Bonacorsi S."/>
            <person name="Bouchier C."/>
            <person name="Bouvet O."/>
            <person name="Calteau A."/>
            <person name="Chiapello H."/>
            <person name="Clermont O."/>
            <person name="Cruveiller S."/>
            <person name="Danchin A."/>
            <person name="Diard M."/>
            <person name="Dossat C."/>
            <person name="Karoui M.E."/>
            <person name="Frapy E."/>
            <person name="Garry L."/>
            <person name="Ghigo J.M."/>
            <person name="Gilles A.M."/>
            <person name="Johnson J."/>
            <person name="Le Bouguenec C."/>
            <person name="Lescat M."/>
            <person name="Mangenot S."/>
            <person name="Martinez-Jehanne V."/>
            <person name="Matic I."/>
            <person name="Nassif X."/>
            <person name="Oztas S."/>
            <person name="Petit M.A."/>
            <person name="Pichon C."/>
            <person name="Rouy Z."/>
            <person name="Ruf C.S."/>
            <person name="Schneider D."/>
            <person name="Tourret J."/>
            <person name="Vacherie B."/>
            <person name="Vallenet D."/>
            <person name="Medigue C."/>
            <person name="Rocha E.P.C."/>
            <person name="Denamur E."/>
        </authorList>
    </citation>
    <scope>NUCLEOTIDE SEQUENCE [LARGE SCALE GENOMIC DNA]</scope>
    <source>
        <strain>ED1a</strain>
    </source>
</reference>
<protein>
    <recommendedName>
        <fullName evidence="1">Glutamine--tRNA ligase</fullName>
        <ecNumber evidence="1">6.1.1.18</ecNumber>
    </recommendedName>
    <alternativeName>
        <fullName evidence="1">Glutaminyl-tRNA synthetase</fullName>
        <shortName evidence="1">GlnRS</shortName>
    </alternativeName>
</protein>
<name>SYQ_ECO81</name>
<keyword id="KW-0030">Aminoacyl-tRNA synthetase</keyword>
<keyword id="KW-0067">ATP-binding</keyword>
<keyword id="KW-0963">Cytoplasm</keyword>
<keyword id="KW-0436">Ligase</keyword>
<keyword id="KW-0547">Nucleotide-binding</keyword>
<keyword id="KW-0648">Protein biosynthesis</keyword>